<proteinExistence type="inferred from homology"/>
<comment type="function">
    <text evidence="1">Pectinolytic enzymes consist of four classes of enzymes: pectin lyase, polygalacturonase, pectin methylesterase and rhamnogalacturonase. Degrades the rhamnogalacturonan I (RG-I) backbone of pectin (By similarity).</text>
</comment>
<comment type="catalytic activity">
    <reaction>
        <text>Endotype eliminative cleavage of L-alpha-rhamnopyranosyl-(1-&gt;4)-alpha-D-galactopyranosyluronic acid bonds of rhamnogalacturonan I domains in ramified hairy regions of pectin leaving L-rhamnopyranose at the reducing end and 4-deoxy-4,5-unsaturated D-galactopyranosyluronic acid at the non-reducing end.</text>
        <dbReference type="EC" id="4.2.2.23"/>
    </reaction>
</comment>
<comment type="subcellular location">
    <subcellularLocation>
        <location evidence="1">Secreted</location>
    </subcellularLocation>
</comment>
<comment type="similarity">
    <text evidence="3">Belongs to the polysaccharide lyase 4 family.</text>
</comment>
<reference key="1">
    <citation type="journal article" date="2002" name="FEBS Lett.">
        <title>Expression profiling of pectinolytic genes from Aspergillus niger.</title>
        <authorList>
            <person name="de Vries R.P."/>
            <person name="Jansen J."/>
            <person name="Aguilar G."/>
            <person name="Paenicova L."/>
            <person name="Joosten J.A.E."/>
            <person name="Wulfert F."/>
            <person name="Visser J."/>
        </authorList>
    </citation>
    <scope>NUCLEOTIDE SEQUENCE [GENOMIC DNA]</scope>
    <source>
        <strain>ATCC 9029 / NRRL 3 / CBS 120.49 / DSM 2466 / N400 / FGSC 732</strain>
    </source>
</reference>
<accession>Q8NJK5</accession>
<keyword id="KW-0119">Carbohydrate metabolism</keyword>
<keyword id="KW-0961">Cell wall biogenesis/degradation</keyword>
<keyword id="KW-1015">Disulfide bond</keyword>
<keyword id="KW-0456">Lyase</keyword>
<keyword id="KW-0624">Polysaccharide degradation</keyword>
<keyword id="KW-0964">Secreted</keyword>
<keyword id="KW-0732">Signal</keyword>
<protein>
    <recommendedName>
        <fullName>Rhamnogalacturonate lyase A</fullName>
        <ecNumber>4.2.2.23</ecNumber>
    </recommendedName>
</protein>
<name>RGLA_ASPNG</name>
<feature type="signal peptide" evidence="2">
    <location>
        <begin position="1"/>
        <end position="20"/>
    </location>
</feature>
<feature type="chain" id="PRO_0000394368" description="Rhamnogalacturonate lyase A">
    <location>
        <begin position="21"/>
        <end position="499"/>
    </location>
</feature>
<feature type="disulfide bond" evidence="1">
    <location>
        <begin position="49"/>
        <end position="92"/>
    </location>
</feature>
<feature type="disulfide bond" evidence="1">
    <location>
        <begin position="183"/>
        <end position="192"/>
    </location>
</feature>
<feature type="non-terminal residue">
    <location>
        <position position="499"/>
    </location>
</feature>
<sequence length="499" mass="53915">MLSKTSLLSLLSLAAGVVNADFGITTSDSYVINANSPNSLVFTVDRGSCDITSIVHYGTELQYSGKGSHIGSGLGTATVSATKSGDYIKVTCETDTLTQYMGVHDGDRIIHMATYITEEPSIGELRFIARLNSDVLPNEEPFGDVSNTADGEPIEGSDVFLVDGETRSKFYSSQRFIDDQRHCIAGDEHRVCMILNQYETSSGGPFHRDINSNNGGDYNSLYWYMNSGHVQLESYRMGLHGPYSMYFSRSGTPSTDIDTSFFADLDIEGYVAESGRGTVSGTASGADSSFDWVVHWYNDDAQYWTYTSSSGSFTSPAMKPGTYTMVYYQGEYVVATSEVTVSAGSSTSKDISGSVETGTTIFKIGDWDGQPTGFRNAENQLRMHPSDSRMSDWGPLTYTVGSSSLTDFPMAIFKSVNSPVTIKFTATSDQTGAATLRIRTTLSFAGGRPQATINDYEGSAPSAPTNLDSRGVTRGAYRGYGDVYDVSVPEGTIVEGENT</sequence>
<gene>
    <name type="primary">rglA</name>
</gene>
<dbReference type="EC" id="4.2.2.23"/>
<dbReference type="EMBL" id="AJ489944">
    <property type="protein sequence ID" value="CAD36194.1"/>
    <property type="molecule type" value="Genomic_DNA"/>
</dbReference>
<dbReference type="SMR" id="Q8NJK5"/>
<dbReference type="CAZy" id="PL4">
    <property type="family name" value="Polysaccharide Lyase Family 4"/>
</dbReference>
<dbReference type="PaxDb" id="5061-CADANGAP00010833"/>
<dbReference type="VEuPathDB" id="FungiDB:An14g01130"/>
<dbReference type="VEuPathDB" id="FungiDB:ASPNIDRAFT2_1115401"/>
<dbReference type="VEuPathDB" id="FungiDB:ATCC64974_1090"/>
<dbReference type="VEuPathDB" id="FungiDB:M747DRAFT_271668"/>
<dbReference type="eggNOG" id="ENOG502QTKY">
    <property type="taxonomic scope" value="Eukaryota"/>
</dbReference>
<dbReference type="GO" id="GO:0005576">
    <property type="term" value="C:extracellular region"/>
    <property type="evidence" value="ECO:0007669"/>
    <property type="project" value="UniProtKB-SubCell"/>
</dbReference>
<dbReference type="GO" id="GO:0030246">
    <property type="term" value="F:carbohydrate binding"/>
    <property type="evidence" value="ECO:0007669"/>
    <property type="project" value="InterPro"/>
</dbReference>
<dbReference type="GO" id="GO:0102210">
    <property type="term" value="F:rhamnogalacturonan endolyase activity"/>
    <property type="evidence" value="ECO:0007669"/>
    <property type="project" value="UniProtKB-EC"/>
</dbReference>
<dbReference type="GO" id="GO:0071555">
    <property type="term" value="P:cell wall organization"/>
    <property type="evidence" value="ECO:0007669"/>
    <property type="project" value="UniProtKB-KW"/>
</dbReference>
<dbReference type="GO" id="GO:0045490">
    <property type="term" value="P:pectin catabolic process"/>
    <property type="evidence" value="ECO:0007669"/>
    <property type="project" value="TreeGrafter"/>
</dbReference>
<dbReference type="CDD" id="cd10317">
    <property type="entry name" value="RGL4_C"/>
    <property type="match status" value="1"/>
</dbReference>
<dbReference type="CDD" id="cd10316">
    <property type="entry name" value="RGL4_M"/>
    <property type="match status" value="1"/>
</dbReference>
<dbReference type="CDD" id="cd10320">
    <property type="entry name" value="RGL4_N"/>
    <property type="match status" value="1"/>
</dbReference>
<dbReference type="FunFam" id="2.60.120.260:FF:000102">
    <property type="entry name" value="Rhamnogalacturonate lyase A"/>
    <property type="match status" value="1"/>
</dbReference>
<dbReference type="FunFam" id="2.60.40.1120:FF:000017">
    <property type="entry name" value="Rhamnogalacturonate lyase A"/>
    <property type="match status" value="1"/>
</dbReference>
<dbReference type="FunFam" id="2.70.98.10:FF:000020">
    <property type="entry name" value="Rhamnogalacturonate lyase A"/>
    <property type="match status" value="1"/>
</dbReference>
<dbReference type="Gene3D" id="2.70.98.10">
    <property type="match status" value="1"/>
</dbReference>
<dbReference type="Gene3D" id="2.60.40.1120">
    <property type="entry name" value="Carboxypeptidase-like, regulatory domain"/>
    <property type="match status" value="1"/>
</dbReference>
<dbReference type="Gene3D" id="2.60.120.260">
    <property type="entry name" value="Galactose-binding domain-like"/>
    <property type="match status" value="1"/>
</dbReference>
<dbReference type="InterPro" id="IPR013784">
    <property type="entry name" value="Carb-bd-like_fold"/>
</dbReference>
<dbReference type="InterPro" id="IPR011013">
    <property type="entry name" value="Gal_mutarotase_sf_dom"/>
</dbReference>
<dbReference type="InterPro" id="IPR008979">
    <property type="entry name" value="Galactose-bd-like_sf"/>
</dbReference>
<dbReference type="InterPro" id="IPR014718">
    <property type="entry name" value="GH-type_carb-bd"/>
</dbReference>
<dbReference type="InterPro" id="IPR029413">
    <property type="entry name" value="RG-lyase_II"/>
</dbReference>
<dbReference type="InterPro" id="IPR029411">
    <property type="entry name" value="RG-lyase_III"/>
</dbReference>
<dbReference type="InterPro" id="IPR016590">
    <property type="entry name" value="Rhamnogalacturonase_B"/>
</dbReference>
<dbReference type="InterPro" id="IPR015364">
    <property type="entry name" value="RhgB_N"/>
</dbReference>
<dbReference type="PANTHER" id="PTHR36574">
    <property type="entry name" value="RHAMNOGALACTURONATE LYASE-RELATED"/>
    <property type="match status" value="1"/>
</dbReference>
<dbReference type="PANTHER" id="PTHR36574:SF1">
    <property type="entry name" value="RHAMNOGALACTURONATE LYASE-RELATED"/>
    <property type="match status" value="1"/>
</dbReference>
<dbReference type="Pfam" id="PF14683">
    <property type="entry name" value="CBM-like"/>
    <property type="match status" value="1"/>
</dbReference>
<dbReference type="Pfam" id="PF14686">
    <property type="entry name" value="fn3_3"/>
    <property type="match status" value="1"/>
</dbReference>
<dbReference type="Pfam" id="PF09284">
    <property type="entry name" value="RhgB_N"/>
    <property type="match status" value="1"/>
</dbReference>
<dbReference type="PIRSF" id="PIRSF011794">
    <property type="entry name" value="Rhamnogalacturonase_B"/>
    <property type="match status" value="1"/>
</dbReference>
<dbReference type="SUPFAM" id="SSF74650">
    <property type="entry name" value="Galactose mutarotase-like"/>
    <property type="match status" value="1"/>
</dbReference>
<dbReference type="SUPFAM" id="SSF49785">
    <property type="entry name" value="Galactose-binding domain-like"/>
    <property type="match status" value="1"/>
</dbReference>
<dbReference type="SUPFAM" id="SSF49452">
    <property type="entry name" value="Starch-binding domain-like"/>
    <property type="match status" value="1"/>
</dbReference>
<evidence type="ECO:0000250" key="1"/>
<evidence type="ECO:0000255" key="2"/>
<evidence type="ECO:0000305" key="3"/>
<organism>
    <name type="scientific">Aspergillus niger</name>
    <dbReference type="NCBI Taxonomy" id="5061"/>
    <lineage>
        <taxon>Eukaryota</taxon>
        <taxon>Fungi</taxon>
        <taxon>Dikarya</taxon>
        <taxon>Ascomycota</taxon>
        <taxon>Pezizomycotina</taxon>
        <taxon>Eurotiomycetes</taxon>
        <taxon>Eurotiomycetidae</taxon>
        <taxon>Eurotiales</taxon>
        <taxon>Aspergillaceae</taxon>
        <taxon>Aspergillus</taxon>
        <taxon>Aspergillus subgen. Circumdati</taxon>
    </lineage>
</organism>